<feature type="chain" id="PRO_1000119536" description="A-type ATP synthase subunit C">
    <location>
        <begin position="1"/>
        <end position="347"/>
    </location>
</feature>
<name>AATC_HALWD</name>
<evidence type="ECO:0000255" key="1">
    <source>
        <dbReference type="HAMAP-Rule" id="MF_00314"/>
    </source>
</evidence>
<sequence>MSVSGSNPEYVTARVKARESALYDDEEYRKLVRMTPAEIARLMEESDYEREINALGSRYSGVDLIEYALNQNLARQFDDLLRWANGRLYDLIARYLRKFDAWNVKTVIRGIYSGTESDTVNDDLIRAGEFSDELLDTLLDAGSIEEAVERLSAAGTIYGSELESAYDDYDESGVLIPLENAVDRTYYEQLLADLTVDEATAQYREFLEAEIDFRNAQNAFRLAQSGADIDPAAYYIDGGSLFTATELATFAQNRNELIEAIRESRYGDDLSEALNQIETADSLIQFERALDNALLEYSDTLGTVHPLSVTPVVSYILAKEREVDNIRAIARGREAGLSDDEIKQEFM</sequence>
<organism>
    <name type="scientific">Haloquadratum walsbyi (strain DSM 16790 / HBSQ001)</name>
    <dbReference type="NCBI Taxonomy" id="362976"/>
    <lineage>
        <taxon>Archaea</taxon>
        <taxon>Methanobacteriati</taxon>
        <taxon>Methanobacteriota</taxon>
        <taxon>Stenosarchaea group</taxon>
        <taxon>Halobacteria</taxon>
        <taxon>Halobacteriales</taxon>
        <taxon>Haloferacaceae</taxon>
        <taxon>Haloquadratum</taxon>
    </lineage>
</organism>
<keyword id="KW-0066">ATP synthesis</keyword>
<keyword id="KW-1003">Cell membrane</keyword>
<keyword id="KW-0375">Hydrogen ion transport</keyword>
<keyword id="KW-0406">Ion transport</keyword>
<keyword id="KW-0472">Membrane</keyword>
<keyword id="KW-1185">Reference proteome</keyword>
<keyword id="KW-0813">Transport</keyword>
<comment type="function">
    <text evidence="1">Component of the A-type ATP synthase that produces ATP from ADP in the presence of a proton gradient across the membrane.</text>
</comment>
<comment type="subunit">
    <text evidence="1">Has multiple subunits with at least A(3), B(3), C, D, E, F, H, I and proteolipid K(x).</text>
</comment>
<comment type="subcellular location">
    <subcellularLocation>
        <location evidence="1">Cell membrane</location>
        <topology evidence="1">Peripheral membrane protein</topology>
    </subcellularLocation>
</comment>
<comment type="similarity">
    <text evidence="1">Belongs to the V-ATPase V0D/AC39 subunit family.</text>
</comment>
<dbReference type="EMBL" id="AM180088">
    <property type="protein sequence ID" value="CAJ53343.1"/>
    <property type="molecule type" value="Genomic_DNA"/>
</dbReference>
<dbReference type="RefSeq" id="WP_011572448.1">
    <property type="nucleotide sequence ID" value="NC_008212.1"/>
</dbReference>
<dbReference type="SMR" id="Q18FB5"/>
<dbReference type="STRING" id="362976.HQ_3246A"/>
<dbReference type="GeneID" id="4193749"/>
<dbReference type="KEGG" id="hwa:HQ_3246A"/>
<dbReference type="eggNOG" id="arCOG02459">
    <property type="taxonomic scope" value="Archaea"/>
</dbReference>
<dbReference type="HOGENOM" id="CLU_059311_0_1_2"/>
<dbReference type="Proteomes" id="UP000001975">
    <property type="component" value="Chromosome"/>
</dbReference>
<dbReference type="GO" id="GO:0005886">
    <property type="term" value="C:plasma membrane"/>
    <property type="evidence" value="ECO:0007669"/>
    <property type="project" value="UniProtKB-SubCell"/>
</dbReference>
<dbReference type="GO" id="GO:0033179">
    <property type="term" value="C:proton-transporting V-type ATPase, V0 domain"/>
    <property type="evidence" value="ECO:0007669"/>
    <property type="project" value="InterPro"/>
</dbReference>
<dbReference type="GO" id="GO:0005524">
    <property type="term" value="F:ATP binding"/>
    <property type="evidence" value="ECO:0007669"/>
    <property type="project" value="UniProtKB-UniRule"/>
</dbReference>
<dbReference type="GO" id="GO:0046933">
    <property type="term" value="F:proton-transporting ATP synthase activity, rotational mechanism"/>
    <property type="evidence" value="ECO:0007669"/>
    <property type="project" value="UniProtKB-UniRule"/>
</dbReference>
<dbReference type="GO" id="GO:0046961">
    <property type="term" value="F:proton-transporting ATPase activity, rotational mechanism"/>
    <property type="evidence" value="ECO:0007669"/>
    <property type="project" value="InterPro"/>
</dbReference>
<dbReference type="GO" id="GO:0042777">
    <property type="term" value="P:proton motive force-driven plasma membrane ATP synthesis"/>
    <property type="evidence" value="ECO:0007669"/>
    <property type="project" value="UniProtKB-UniRule"/>
</dbReference>
<dbReference type="Gene3D" id="1.10.132.50">
    <property type="entry name" value="ATP synthase (C/AC39) subunit, domain 3"/>
    <property type="match status" value="1"/>
</dbReference>
<dbReference type="Gene3D" id="1.20.1690.10">
    <property type="entry name" value="V-type ATP synthase subunit C domain"/>
    <property type="match status" value="2"/>
</dbReference>
<dbReference type="HAMAP" id="MF_00314">
    <property type="entry name" value="ATP_synth_C_arch"/>
    <property type="match status" value="1"/>
</dbReference>
<dbReference type="InterPro" id="IPR036079">
    <property type="entry name" value="ATPase_csu/dsu_sf"/>
</dbReference>
<dbReference type="InterPro" id="IPR014272">
    <property type="entry name" value="ATPase_V0-cplx_csu"/>
</dbReference>
<dbReference type="InterPro" id="IPR002843">
    <property type="entry name" value="ATPase_V0-cplx_csu/dsu"/>
</dbReference>
<dbReference type="InterPro" id="IPR050873">
    <property type="entry name" value="V-ATPase_V0D/AC39_subunit"/>
</dbReference>
<dbReference type="InterPro" id="IPR035067">
    <property type="entry name" value="V-type_ATPase_csu/dsu"/>
</dbReference>
<dbReference type="InterPro" id="IPR044911">
    <property type="entry name" value="V-type_ATPase_csu/dsu_dom_3"/>
</dbReference>
<dbReference type="NCBIfam" id="TIGR02923">
    <property type="entry name" value="AhaC"/>
    <property type="match status" value="1"/>
</dbReference>
<dbReference type="NCBIfam" id="NF002265">
    <property type="entry name" value="PRK01198.1-1"/>
    <property type="match status" value="1"/>
</dbReference>
<dbReference type="PANTHER" id="PTHR38682">
    <property type="entry name" value="V-TYPE ATP SYNTHASE SUBUNIT C"/>
    <property type="match status" value="1"/>
</dbReference>
<dbReference type="PANTHER" id="PTHR38682:SF1">
    <property type="entry name" value="V-TYPE ATP SYNTHASE SUBUNIT C"/>
    <property type="match status" value="1"/>
</dbReference>
<dbReference type="Pfam" id="PF01992">
    <property type="entry name" value="vATP-synt_AC39"/>
    <property type="match status" value="1"/>
</dbReference>
<dbReference type="SUPFAM" id="SSF103486">
    <property type="entry name" value="V-type ATP synthase subunit C"/>
    <property type="match status" value="1"/>
</dbReference>
<proteinExistence type="inferred from homology"/>
<accession>Q18FB5</accession>
<reference key="1">
    <citation type="journal article" date="2006" name="BMC Genomics">
        <title>The genome of the square archaeon Haloquadratum walsbyi: life at the limits of water activity.</title>
        <authorList>
            <person name="Bolhuis H."/>
            <person name="Palm P."/>
            <person name="Wende A."/>
            <person name="Falb M."/>
            <person name="Rampp M."/>
            <person name="Rodriguez-Valera F."/>
            <person name="Pfeiffer F."/>
            <person name="Oesterhelt D."/>
        </authorList>
    </citation>
    <scope>NUCLEOTIDE SEQUENCE [LARGE SCALE GENOMIC DNA]</scope>
    <source>
        <strain>DSM 16790 / HBSQ001</strain>
    </source>
</reference>
<protein>
    <recommendedName>
        <fullName evidence="1">A-type ATP synthase subunit C</fullName>
    </recommendedName>
</protein>
<gene>
    <name evidence="1" type="primary">atpC</name>
    <name type="ordered locus">HQ_3246A</name>
</gene>